<keyword id="KW-0028">Amino-acid biosynthesis</keyword>
<keyword id="KW-0055">Arginine biosynthesis</keyword>
<keyword id="KW-0067">ATP-binding</keyword>
<keyword id="KW-0963">Cytoplasm</keyword>
<keyword id="KW-0436">Ligase</keyword>
<keyword id="KW-0547">Nucleotide-binding</keyword>
<sequence>MKKDVKKVVLAYSGGLDTSIILKWLQDEYKCEVVTFTADIGQGEELEPARKKALALGVKPENIFIEDLREEFVRDYVFPMFRANAIYEGEYLLGTSIARPLIAKRQSEIARLVGADGVSHGATGKGNDQVRFELGYYALGDNLTIIAPWREWDLNSREKLLAYAEKNGIDITKKPGKSPYSMDANLLHISYEGLVLEDPSHAPEDDMWRWTVSPKDAPDKSEIIEIGYEKGDPVSIDGKKMSPAEILTELNRLGAKHGIGRLDIVENRSVGMKSRGCYETPGGTIMLKAHRAIESITLDRGAAHLKDEIMPKYAELVYNGYWWSPERNMLQALIDKSQEHVNGSVKVELYKGNVTILGRSSKDDNLFSEAYCTFEEDSVYDQKDAEGFIKLNALRFIIARKNGRKFD</sequence>
<comment type="catalytic activity">
    <reaction evidence="1">
        <text>L-citrulline + L-aspartate + ATP = 2-(N(omega)-L-arginino)succinate + AMP + diphosphate + H(+)</text>
        <dbReference type="Rhea" id="RHEA:10932"/>
        <dbReference type="ChEBI" id="CHEBI:15378"/>
        <dbReference type="ChEBI" id="CHEBI:29991"/>
        <dbReference type="ChEBI" id="CHEBI:30616"/>
        <dbReference type="ChEBI" id="CHEBI:33019"/>
        <dbReference type="ChEBI" id="CHEBI:57472"/>
        <dbReference type="ChEBI" id="CHEBI:57743"/>
        <dbReference type="ChEBI" id="CHEBI:456215"/>
        <dbReference type="EC" id="6.3.4.5"/>
    </reaction>
</comment>
<comment type="pathway">
    <text evidence="1">Amino-acid biosynthesis; L-arginine biosynthesis; L-arginine from L-ornithine and carbamoyl phosphate: step 2/3.</text>
</comment>
<comment type="subunit">
    <text evidence="1">Homotetramer.</text>
</comment>
<comment type="subcellular location">
    <subcellularLocation>
        <location evidence="1">Cytoplasm</location>
    </subcellularLocation>
</comment>
<comment type="similarity">
    <text evidence="1">Belongs to the argininosuccinate synthase family. Type 1 subfamily.</text>
</comment>
<protein>
    <recommendedName>
        <fullName evidence="1">Argininosuccinate synthase</fullName>
        <ecNumber evidence="1">6.3.4.5</ecNumber>
    </recommendedName>
    <alternativeName>
        <fullName evidence="1">Citrulline--aspartate ligase</fullName>
    </alternativeName>
</protein>
<accession>A7ZDF2</accession>
<evidence type="ECO:0000255" key="1">
    <source>
        <dbReference type="HAMAP-Rule" id="MF_00005"/>
    </source>
</evidence>
<organism>
    <name type="scientific">Campylobacter concisus (strain 13826)</name>
    <dbReference type="NCBI Taxonomy" id="360104"/>
    <lineage>
        <taxon>Bacteria</taxon>
        <taxon>Pseudomonadati</taxon>
        <taxon>Campylobacterota</taxon>
        <taxon>Epsilonproteobacteria</taxon>
        <taxon>Campylobacterales</taxon>
        <taxon>Campylobacteraceae</taxon>
        <taxon>Campylobacter</taxon>
    </lineage>
</organism>
<feature type="chain" id="PRO_1000000386" description="Argininosuccinate synthase">
    <location>
        <begin position="1"/>
        <end position="407"/>
    </location>
</feature>
<feature type="binding site" evidence="1">
    <location>
        <begin position="11"/>
        <end position="19"/>
    </location>
    <ligand>
        <name>ATP</name>
        <dbReference type="ChEBI" id="CHEBI:30616"/>
    </ligand>
</feature>
<feature type="binding site" evidence="1">
    <location>
        <position position="38"/>
    </location>
    <ligand>
        <name>ATP</name>
        <dbReference type="ChEBI" id="CHEBI:30616"/>
    </ligand>
</feature>
<feature type="binding site" evidence="1">
    <location>
        <position position="91"/>
    </location>
    <ligand>
        <name>L-citrulline</name>
        <dbReference type="ChEBI" id="CHEBI:57743"/>
    </ligand>
</feature>
<feature type="binding site" evidence="1">
    <location>
        <position position="96"/>
    </location>
    <ligand>
        <name>L-citrulline</name>
        <dbReference type="ChEBI" id="CHEBI:57743"/>
    </ligand>
</feature>
<feature type="binding site" evidence="1">
    <location>
        <position position="121"/>
    </location>
    <ligand>
        <name>ATP</name>
        <dbReference type="ChEBI" id="CHEBI:30616"/>
    </ligand>
</feature>
<feature type="binding site" evidence="1">
    <location>
        <position position="123"/>
    </location>
    <ligand>
        <name>L-aspartate</name>
        <dbReference type="ChEBI" id="CHEBI:29991"/>
    </ligand>
</feature>
<feature type="binding site" evidence="1">
    <location>
        <position position="127"/>
    </location>
    <ligand>
        <name>L-aspartate</name>
        <dbReference type="ChEBI" id="CHEBI:29991"/>
    </ligand>
</feature>
<feature type="binding site" evidence="1">
    <location>
        <position position="127"/>
    </location>
    <ligand>
        <name>L-citrulline</name>
        <dbReference type="ChEBI" id="CHEBI:57743"/>
    </ligand>
</feature>
<feature type="binding site" evidence="1">
    <location>
        <position position="128"/>
    </location>
    <ligand>
        <name>L-aspartate</name>
        <dbReference type="ChEBI" id="CHEBI:29991"/>
    </ligand>
</feature>
<feature type="binding site" evidence="1">
    <location>
        <position position="131"/>
    </location>
    <ligand>
        <name>L-citrulline</name>
        <dbReference type="ChEBI" id="CHEBI:57743"/>
    </ligand>
</feature>
<feature type="binding site" evidence="1">
    <location>
        <position position="181"/>
    </location>
    <ligand>
        <name>L-citrulline</name>
        <dbReference type="ChEBI" id="CHEBI:57743"/>
    </ligand>
</feature>
<feature type="binding site" evidence="1">
    <location>
        <position position="190"/>
    </location>
    <ligand>
        <name>L-citrulline</name>
        <dbReference type="ChEBI" id="CHEBI:57743"/>
    </ligand>
</feature>
<feature type="binding site" evidence="1">
    <location>
        <position position="266"/>
    </location>
    <ligand>
        <name>L-citrulline</name>
        <dbReference type="ChEBI" id="CHEBI:57743"/>
    </ligand>
</feature>
<feature type="binding site" evidence="1">
    <location>
        <position position="278"/>
    </location>
    <ligand>
        <name>L-citrulline</name>
        <dbReference type="ChEBI" id="CHEBI:57743"/>
    </ligand>
</feature>
<gene>
    <name evidence="1" type="primary">argG</name>
    <name type="ordered locus">Ccon26_09420</name>
    <name type="ORF">CCC13826_1219</name>
</gene>
<proteinExistence type="inferred from homology"/>
<reference key="1">
    <citation type="submission" date="2007-10" db="EMBL/GenBank/DDBJ databases">
        <title>Genome sequence of Campylobacter concisus 13826 isolated from human feces.</title>
        <authorList>
            <person name="Fouts D.E."/>
            <person name="Mongodin E.F."/>
            <person name="Puiu D."/>
            <person name="Sebastian Y."/>
            <person name="Miller W.G."/>
            <person name="Mandrell R.E."/>
            <person name="On S."/>
            <person name="Nelson K.E."/>
        </authorList>
    </citation>
    <scope>NUCLEOTIDE SEQUENCE [LARGE SCALE GENOMIC DNA]</scope>
    <source>
        <strain>13826</strain>
    </source>
</reference>
<name>ASSY_CAMC1</name>
<dbReference type="EC" id="6.3.4.5" evidence="1"/>
<dbReference type="EMBL" id="CP000792">
    <property type="protein sequence ID" value="EAT98616.1"/>
    <property type="molecule type" value="Genomic_DNA"/>
</dbReference>
<dbReference type="RefSeq" id="WP_012001740.1">
    <property type="nucleotide sequence ID" value="NC_009802.2"/>
</dbReference>
<dbReference type="SMR" id="A7ZDF2"/>
<dbReference type="STRING" id="360104.CCC13826_1219"/>
<dbReference type="KEGG" id="cco:CCC13826_1219"/>
<dbReference type="eggNOG" id="COG0137">
    <property type="taxonomic scope" value="Bacteria"/>
</dbReference>
<dbReference type="HOGENOM" id="CLU_032784_4_2_7"/>
<dbReference type="OrthoDB" id="9801641at2"/>
<dbReference type="UniPathway" id="UPA00068">
    <property type="reaction ID" value="UER00113"/>
</dbReference>
<dbReference type="Proteomes" id="UP000001121">
    <property type="component" value="Chromosome"/>
</dbReference>
<dbReference type="GO" id="GO:0005737">
    <property type="term" value="C:cytoplasm"/>
    <property type="evidence" value="ECO:0007669"/>
    <property type="project" value="UniProtKB-SubCell"/>
</dbReference>
<dbReference type="GO" id="GO:0004055">
    <property type="term" value="F:argininosuccinate synthase activity"/>
    <property type="evidence" value="ECO:0007669"/>
    <property type="project" value="UniProtKB-UniRule"/>
</dbReference>
<dbReference type="GO" id="GO:0005524">
    <property type="term" value="F:ATP binding"/>
    <property type="evidence" value="ECO:0007669"/>
    <property type="project" value="UniProtKB-UniRule"/>
</dbReference>
<dbReference type="GO" id="GO:0000053">
    <property type="term" value="P:argininosuccinate metabolic process"/>
    <property type="evidence" value="ECO:0007669"/>
    <property type="project" value="TreeGrafter"/>
</dbReference>
<dbReference type="GO" id="GO:0006526">
    <property type="term" value="P:L-arginine biosynthetic process"/>
    <property type="evidence" value="ECO:0007669"/>
    <property type="project" value="UniProtKB-UniRule"/>
</dbReference>
<dbReference type="GO" id="GO:0000050">
    <property type="term" value="P:urea cycle"/>
    <property type="evidence" value="ECO:0007669"/>
    <property type="project" value="TreeGrafter"/>
</dbReference>
<dbReference type="CDD" id="cd01999">
    <property type="entry name" value="ASS"/>
    <property type="match status" value="1"/>
</dbReference>
<dbReference type="FunFam" id="3.40.50.620:FF:000019">
    <property type="entry name" value="Argininosuccinate synthase"/>
    <property type="match status" value="1"/>
</dbReference>
<dbReference type="FunFam" id="3.90.1260.10:FF:000007">
    <property type="entry name" value="Argininosuccinate synthase"/>
    <property type="match status" value="1"/>
</dbReference>
<dbReference type="Gene3D" id="3.90.1260.10">
    <property type="entry name" value="Argininosuccinate synthetase, chain A, domain 2"/>
    <property type="match status" value="1"/>
</dbReference>
<dbReference type="Gene3D" id="3.40.50.620">
    <property type="entry name" value="HUPs"/>
    <property type="match status" value="1"/>
</dbReference>
<dbReference type="Gene3D" id="1.20.5.470">
    <property type="entry name" value="Single helix bin"/>
    <property type="match status" value="1"/>
</dbReference>
<dbReference type="HAMAP" id="MF_00005">
    <property type="entry name" value="Arg_succ_synth_type1"/>
    <property type="match status" value="1"/>
</dbReference>
<dbReference type="InterPro" id="IPR048268">
    <property type="entry name" value="Arginosuc_syn_C"/>
</dbReference>
<dbReference type="InterPro" id="IPR048267">
    <property type="entry name" value="Arginosuc_syn_N"/>
</dbReference>
<dbReference type="InterPro" id="IPR001518">
    <property type="entry name" value="Arginosuc_synth"/>
</dbReference>
<dbReference type="InterPro" id="IPR018223">
    <property type="entry name" value="Arginosuc_synth_CS"/>
</dbReference>
<dbReference type="InterPro" id="IPR023434">
    <property type="entry name" value="Arginosuc_synth_type_1_subfam"/>
</dbReference>
<dbReference type="InterPro" id="IPR024074">
    <property type="entry name" value="AS_cat/multimer_dom_body"/>
</dbReference>
<dbReference type="InterPro" id="IPR014729">
    <property type="entry name" value="Rossmann-like_a/b/a_fold"/>
</dbReference>
<dbReference type="NCBIfam" id="TIGR00032">
    <property type="entry name" value="argG"/>
    <property type="match status" value="1"/>
</dbReference>
<dbReference type="NCBIfam" id="NF001770">
    <property type="entry name" value="PRK00509.1"/>
    <property type="match status" value="1"/>
</dbReference>
<dbReference type="PANTHER" id="PTHR11587">
    <property type="entry name" value="ARGININOSUCCINATE SYNTHASE"/>
    <property type="match status" value="1"/>
</dbReference>
<dbReference type="PANTHER" id="PTHR11587:SF2">
    <property type="entry name" value="ARGININOSUCCINATE SYNTHASE"/>
    <property type="match status" value="1"/>
</dbReference>
<dbReference type="Pfam" id="PF20979">
    <property type="entry name" value="Arginosuc_syn_C"/>
    <property type="match status" value="1"/>
</dbReference>
<dbReference type="Pfam" id="PF00764">
    <property type="entry name" value="Arginosuc_synth"/>
    <property type="match status" value="1"/>
</dbReference>
<dbReference type="SUPFAM" id="SSF52402">
    <property type="entry name" value="Adenine nucleotide alpha hydrolases-like"/>
    <property type="match status" value="1"/>
</dbReference>
<dbReference type="SUPFAM" id="SSF69864">
    <property type="entry name" value="Argininosuccinate synthetase, C-terminal domain"/>
    <property type="match status" value="1"/>
</dbReference>
<dbReference type="PROSITE" id="PS00564">
    <property type="entry name" value="ARGININOSUCCIN_SYN_1"/>
    <property type="match status" value="1"/>
</dbReference>
<dbReference type="PROSITE" id="PS00565">
    <property type="entry name" value="ARGININOSUCCIN_SYN_2"/>
    <property type="match status" value="1"/>
</dbReference>